<gene>
    <name type="primary">NFATC4</name>
    <name evidence="21 22 23 25" type="synonym">NFAT3</name>
</gene>
<dbReference type="EMBL" id="L41066">
    <property type="protein sequence ID" value="AAA79175.1"/>
    <property type="molecule type" value="mRNA"/>
</dbReference>
<dbReference type="EMBL" id="EU887632">
    <property type="protein sequence ID" value="ACG55652.1"/>
    <property type="molecule type" value="mRNA"/>
</dbReference>
<dbReference type="EMBL" id="EU887633">
    <property type="protein sequence ID" value="ACG55653.1"/>
    <property type="molecule type" value="mRNA"/>
</dbReference>
<dbReference type="EMBL" id="EU887634">
    <property type="protein sequence ID" value="ACG55654.1"/>
    <property type="molecule type" value="mRNA"/>
</dbReference>
<dbReference type="EMBL" id="EU887635">
    <property type="protein sequence ID" value="ACG55655.1"/>
    <property type="molecule type" value="mRNA"/>
</dbReference>
<dbReference type="EMBL" id="EU887636">
    <property type="protein sequence ID" value="ACG55656.1"/>
    <property type="molecule type" value="mRNA"/>
</dbReference>
<dbReference type="EMBL" id="EU887637">
    <property type="protein sequence ID" value="ACG55657.1"/>
    <property type="molecule type" value="mRNA"/>
</dbReference>
<dbReference type="EMBL" id="EU887638">
    <property type="protein sequence ID" value="ACG55658.1"/>
    <property type="molecule type" value="mRNA"/>
</dbReference>
<dbReference type="EMBL" id="EU887639">
    <property type="protein sequence ID" value="ACG55659.1"/>
    <property type="molecule type" value="mRNA"/>
</dbReference>
<dbReference type="EMBL" id="EU887640">
    <property type="protein sequence ID" value="ACG55660.1"/>
    <property type="molecule type" value="mRNA"/>
</dbReference>
<dbReference type="EMBL" id="EU887641">
    <property type="protein sequence ID" value="ACG55661.1"/>
    <property type="molecule type" value="mRNA"/>
</dbReference>
<dbReference type="EMBL" id="EU887642">
    <property type="protein sequence ID" value="ACG55662.1"/>
    <property type="molecule type" value="mRNA"/>
</dbReference>
<dbReference type="EMBL" id="EU887643">
    <property type="protein sequence ID" value="ACG55663.1"/>
    <property type="molecule type" value="mRNA"/>
</dbReference>
<dbReference type="EMBL" id="EU887644">
    <property type="protein sequence ID" value="ACG55664.1"/>
    <property type="molecule type" value="mRNA"/>
</dbReference>
<dbReference type="EMBL" id="EU887645">
    <property type="protein sequence ID" value="ACG55665.1"/>
    <property type="molecule type" value="mRNA"/>
</dbReference>
<dbReference type="EMBL" id="EU887646">
    <property type="protein sequence ID" value="ACG55666.1"/>
    <property type="molecule type" value="mRNA"/>
</dbReference>
<dbReference type="EMBL" id="EU887647">
    <property type="protein sequence ID" value="ACG55667.1"/>
    <property type="molecule type" value="mRNA"/>
</dbReference>
<dbReference type="EMBL" id="EU887648">
    <property type="protein sequence ID" value="ACG55668.1"/>
    <property type="molecule type" value="mRNA"/>
</dbReference>
<dbReference type="EMBL" id="EU887649">
    <property type="protein sequence ID" value="ACG55669.1"/>
    <property type="molecule type" value="mRNA"/>
</dbReference>
<dbReference type="EMBL" id="EU887650">
    <property type="protein sequence ID" value="ACG55670.1"/>
    <property type="molecule type" value="mRNA"/>
</dbReference>
<dbReference type="EMBL" id="EU887651">
    <property type="protein sequence ID" value="ACG55671.1"/>
    <property type="molecule type" value="mRNA"/>
</dbReference>
<dbReference type="EMBL" id="EU887652">
    <property type="protein sequence ID" value="ACG55672.1"/>
    <property type="molecule type" value="mRNA"/>
</dbReference>
<dbReference type="EMBL" id="EU887653">
    <property type="protein sequence ID" value="ACG55673.1"/>
    <property type="molecule type" value="mRNA"/>
</dbReference>
<dbReference type="EMBL" id="EU887654">
    <property type="protein sequence ID" value="ACG55674.1"/>
    <property type="molecule type" value="mRNA"/>
</dbReference>
<dbReference type="EMBL" id="EU887655">
    <property type="protein sequence ID" value="ACG55675.1"/>
    <property type="molecule type" value="mRNA"/>
</dbReference>
<dbReference type="EMBL" id="AK293185">
    <property type="protein sequence ID" value="BAG56726.1"/>
    <property type="molecule type" value="mRNA"/>
</dbReference>
<dbReference type="EMBL" id="AK302271">
    <property type="protein sequence ID" value="BAG63617.1"/>
    <property type="molecule type" value="mRNA"/>
</dbReference>
<dbReference type="EMBL" id="BC008857">
    <property type="protein sequence ID" value="AAH08857.2"/>
    <property type="molecule type" value="mRNA"/>
</dbReference>
<dbReference type="EMBL" id="BC053855">
    <property type="protein sequence ID" value="AAH53855.1"/>
    <property type="molecule type" value="mRNA"/>
</dbReference>
<dbReference type="CCDS" id="CCDS45089.1">
    <molecule id="Q14934-3"/>
</dbReference>
<dbReference type="CCDS" id="CCDS55909.1">
    <molecule id="Q14934-11"/>
</dbReference>
<dbReference type="CCDS" id="CCDS55910.1">
    <molecule id="Q14934-16"/>
</dbReference>
<dbReference type="CCDS" id="CCDS55911.1">
    <molecule id="Q14934-12"/>
</dbReference>
<dbReference type="CCDS" id="CCDS73625.1">
    <molecule id="Q14934-10"/>
</dbReference>
<dbReference type="CCDS" id="CCDS86379.1">
    <molecule id="Q14934-17"/>
</dbReference>
<dbReference type="CCDS" id="CCDS86380.1">
    <molecule id="Q14934-9"/>
</dbReference>
<dbReference type="CCDS" id="CCDS9629.1">
    <molecule id="Q14934-1"/>
</dbReference>
<dbReference type="RefSeq" id="NP_001129494.1">
    <molecule id="Q14934-3"/>
    <property type="nucleotide sequence ID" value="NM_001136022.3"/>
</dbReference>
<dbReference type="RefSeq" id="NP_001185894.1">
    <molecule id="Q14934-16"/>
    <property type="nucleotide sequence ID" value="NM_001198965.2"/>
</dbReference>
<dbReference type="RefSeq" id="NP_001185895.1">
    <molecule id="Q14934-12"/>
    <property type="nucleotide sequence ID" value="NM_001198966.2"/>
</dbReference>
<dbReference type="RefSeq" id="NP_001185896.1">
    <molecule id="Q14934-11"/>
    <property type="nucleotide sequence ID" value="NM_001198967.3"/>
</dbReference>
<dbReference type="RefSeq" id="NP_001275731.1">
    <molecule id="Q14934-10"/>
    <property type="nucleotide sequence ID" value="NM_001288802.2"/>
</dbReference>
<dbReference type="RefSeq" id="NP_001306972.1">
    <molecule id="Q14934-2"/>
    <property type="nucleotide sequence ID" value="NM_001320043.2"/>
</dbReference>
<dbReference type="RefSeq" id="NP_001350610.1">
    <molecule id="Q14934-9"/>
    <property type="nucleotide sequence ID" value="NM_001363681.1"/>
</dbReference>
<dbReference type="RefSeq" id="NP_001350611.1">
    <molecule id="Q14934-17"/>
    <property type="nucleotide sequence ID" value="NM_001363682.1"/>
</dbReference>
<dbReference type="RefSeq" id="NP_004545.2">
    <molecule id="Q14934-1"/>
    <property type="nucleotide sequence ID" value="NM_004554.4"/>
</dbReference>
<dbReference type="RefSeq" id="XP_011535099.1">
    <property type="nucleotide sequence ID" value="XM_011536797.2"/>
</dbReference>
<dbReference type="RefSeq" id="XP_011535101.1">
    <property type="nucleotide sequence ID" value="XM_011536799.2"/>
</dbReference>
<dbReference type="PDB" id="2YRP">
    <property type="method" value="NMR"/>
    <property type="chains" value="A=585-691"/>
</dbReference>
<dbReference type="PDBsum" id="2YRP"/>
<dbReference type="BMRB" id="Q14934"/>
<dbReference type="SMR" id="Q14934"/>
<dbReference type="BioGRID" id="110849">
    <property type="interactions" value="58"/>
</dbReference>
<dbReference type="FunCoup" id="Q14934">
    <property type="interactions" value="1082"/>
</dbReference>
<dbReference type="IntAct" id="Q14934">
    <property type="interactions" value="35"/>
</dbReference>
<dbReference type="MINT" id="Q14934"/>
<dbReference type="STRING" id="9606.ENSP00000388910"/>
<dbReference type="GlyGen" id="Q14934">
    <property type="glycosylation" value="4 sites, 1 O-linked glycan (1 site)"/>
</dbReference>
<dbReference type="iPTMnet" id="Q14934"/>
<dbReference type="PhosphoSitePlus" id="Q14934"/>
<dbReference type="BioMuta" id="NFATC4"/>
<dbReference type="DMDM" id="215274090"/>
<dbReference type="CPTAC" id="CPTAC-1749"/>
<dbReference type="jPOST" id="Q14934"/>
<dbReference type="MassIVE" id="Q14934"/>
<dbReference type="PaxDb" id="9606-ENSP00000388910"/>
<dbReference type="PeptideAtlas" id="Q14934"/>
<dbReference type="ProteomicsDB" id="60223">
    <molecule id="Q14934-1"/>
</dbReference>
<dbReference type="ProteomicsDB" id="60224">
    <molecule id="Q14934-10"/>
</dbReference>
<dbReference type="ProteomicsDB" id="60225">
    <molecule id="Q14934-11"/>
</dbReference>
<dbReference type="ProteomicsDB" id="60226">
    <molecule id="Q14934-12"/>
</dbReference>
<dbReference type="ProteomicsDB" id="60227">
    <molecule id="Q14934-13"/>
</dbReference>
<dbReference type="ProteomicsDB" id="60228">
    <molecule id="Q14934-14"/>
</dbReference>
<dbReference type="ProteomicsDB" id="60229">
    <molecule id="Q14934-15"/>
</dbReference>
<dbReference type="ProteomicsDB" id="60230">
    <molecule id="Q14934-16"/>
</dbReference>
<dbReference type="ProteomicsDB" id="60231">
    <molecule id="Q14934-17"/>
</dbReference>
<dbReference type="ProteomicsDB" id="60232">
    <molecule id="Q14934-18"/>
</dbReference>
<dbReference type="ProteomicsDB" id="60233">
    <molecule id="Q14934-19"/>
</dbReference>
<dbReference type="ProteomicsDB" id="60234">
    <molecule id="Q14934-2"/>
</dbReference>
<dbReference type="ProteomicsDB" id="60235">
    <molecule id="Q14934-20"/>
</dbReference>
<dbReference type="ProteomicsDB" id="60236">
    <molecule id="Q14934-21"/>
</dbReference>
<dbReference type="ProteomicsDB" id="60237">
    <molecule id="Q14934-22"/>
</dbReference>
<dbReference type="ProteomicsDB" id="60238">
    <molecule id="Q14934-23"/>
</dbReference>
<dbReference type="ProteomicsDB" id="60239">
    <molecule id="Q14934-24"/>
</dbReference>
<dbReference type="ProteomicsDB" id="60240">
    <molecule id="Q14934-3"/>
</dbReference>
<dbReference type="ProteomicsDB" id="60241">
    <molecule id="Q14934-4"/>
</dbReference>
<dbReference type="ProteomicsDB" id="60242">
    <molecule id="Q14934-5"/>
</dbReference>
<dbReference type="ProteomicsDB" id="60243">
    <molecule id="Q14934-6"/>
</dbReference>
<dbReference type="ProteomicsDB" id="60244">
    <molecule id="Q14934-7"/>
</dbReference>
<dbReference type="ProteomicsDB" id="60245">
    <molecule id="Q14934-8"/>
</dbReference>
<dbReference type="ProteomicsDB" id="60246">
    <molecule id="Q14934-9"/>
</dbReference>
<dbReference type="Pumba" id="Q14934"/>
<dbReference type="Antibodypedia" id="9248">
    <property type="antibodies" value="482 antibodies from 37 providers"/>
</dbReference>
<dbReference type="DNASU" id="4776"/>
<dbReference type="Ensembl" id="ENST00000250373.9">
    <molecule id="Q14934-1"/>
    <property type="protein sequence ID" value="ENSP00000250373.4"/>
    <property type="gene ID" value="ENSG00000100968.14"/>
</dbReference>
<dbReference type="Ensembl" id="ENST00000413692.6">
    <molecule id="Q14934-3"/>
    <property type="protein sequence ID" value="ENSP00000388910.2"/>
    <property type="gene ID" value="ENSG00000100968.14"/>
</dbReference>
<dbReference type="Ensembl" id="ENST00000422617.7">
    <molecule id="Q14934-10"/>
    <property type="protein sequence ID" value="ENSP00000396788.3"/>
    <property type="gene ID" value="ENSG00000100968.14"/>
</dbReference>
<dbReference type="Ensembl" id="ENST00000424781.6">
    <molecule id="Q14934-7"/>
    <property type="protein sequence ID" value="ENSP00000388668.2"/>
    <property type="gene ID" value="ENSG00000100968.14"/>
</dbReference>
<dbReference type="Ensembl" id="ENST00000539237.6">
    <molecule id="Q14934-5"/>
    <property type="protein sequence ID" value="ENSP00000439350.2"/>
    <property type="gene ID" value="ENSG00000100968.14"/>
</dbReference>
<dbReference type="Ensembl" id="ENST00000553469.5">
    <molecule id="Q14934-14"/>
    <property type="protein sequence ID" value="ENSP00000451502.1"/>
    <property type="gene ID" value="ENSG00000100968.14"/>
</dbReference>
<dbReference type="Ensembl" id="ENST00000553708.5">
    <molecule id="Q14934-8"/>
    <property type="protein sequence ID" value="ENSP00000450590.1"/>
    <property type="gene ID" value="ENSG00000100968.14"/>
</dbReference>
<dbReference type="Ensembl" id="ENST00000553879.5">
    <molecule id="Q14934-12"/>
    <property type="protein sequence ID" value="ENSP00000452349.1"/>
    <property type="gene ID" value="ENSG00000100968.14"/>
</dbReference>
<dbReference type="Ensembl" id="ENST00000554050.5">
    <molecule id="Q14934-16"/>
    <property type="protein sequence ID" value="ENSP00000451151.1"/>
    <property type="gene ID" value="ENSG00000100968.14"/>
</dbReference>
<dbReference type="Ensembl" id="ENST00000554344.5">
    <molecule id="Q14934-12"/>
    <property type="protein sequence ID" value="ENSP00000450469.1"/>
    <property type="gene ID" value="ENSG00000100968.14"/>
</dbReference>
<dbReference type="Ensembl" id="ENST00000554473.5">
    <molecule id="Q14934-21"/>
    <property type="protein sequence ID" value="ENSP00000450810.1"/>
    <property type="gene ID" value="ENSG00000100968.14"/>
</dbReference>
<dbReference type="Ensembl" id="ENST00000554591.5">
    <molecule id="Q14934-11"/>
    <property type="protein sequence ID" value="ENSP00000452039.1"/>
    <property type="gene ID" value="ENSG00000100968.14"/>
</dbReference>
<dbReference type="Ensembl" id="ENST00000554661.5">
    <molecule id="Q14934-18"/>
    <property type="protein sequence ID" value="ENSP00000450733.1"/>
    <property type="gene ID" value="ENSG00000100968.14"/>
</dbReference>
<dbReference type="Ensembl" id="ENST00000554966.5">
    <molecule id="Q14934-15"/>
    <property type="protein sequence ID" value="ENSP00000450644.1"/>
    <property type="gene ID" value="ENSG00000100968.14"/>
</dbReference>
<dbReference type="Ensembl" id="ENST00000555167.1">
    <molecule id="Q14934-20"/>
    <property type="protein sequence ID" value="ENSP00000451395.1"/>
    <property type="gene ID" value="ENSG00000100968.14"/>
</dbReference>
<dbReference type="Ensembl" id="ENST00000555393.5">
    <molecule id="Q14934-23"/>
    <property type="protein sequence ID" value="ENSP00000451801.1"/>
    <property type="gene ID" value="ENSG00000100968.14"/>
</dbReference>
<dbReference type="Ensembl" id="ENST00000555453.5">
    <molecule id="Q14934-9"/>
    <property type="protein sequence ID" value="ENSP00000450686.1"/>
    <property type="gene ID" value="ENSG00000100968.14"/>
</dbReference>
<dbReference type="Ensembl" id="ENST00000555590.5">
    <molecule id="Q14934-6"/>
    <property type="protein sequence ID" value="ENSP00000451224.1"/>
    <property type="gene ID" value="ENSG00000100968.14"/>
</dbReference>
<dbReference type="Ensembl" id="ENST00000555802.1">
    <molecule id="Q14934-22"/>
    <property type="protein sequence ID" value="ENSP00000451590.1"/>
    <property type="gene ID" value="ENSG00000100968.14"/>
</dbReference>
<dbReference type="Ensembl" id="ENST00000556169.5">
    <molecule id="Q14934-17"/>
    <property type="protein sequence ID" value="ENSP00000451454.1"/>
    <property type="gene ID" value="ENSG00000100968.14"/>
</dbReference>
<dbReference type="Ensembl" id="ENST00000556279.5">
    <molecule id="Q14934-4"/>
    <property type="protein sequence ID" value="ENSP00000452270.1"/>
    <property type="gene ID" value="ENSG00000100968.14"/>
</dbReference>
<dbReference type="Ensembl" id="ENST00000556759.5">
    <molecule id="Q14934-19"/>
    <property type="protein sequence ID" value="ENSP00000451183.1"/>
    <property type="gene ID" value="ENSG00000100968.14"/>
</dbReference>
<dbReference type="Ensembl" id="ENST00000557451.5">
    <molecule id="Q14934-13"/>
    <property type="protein sequence ID" value="ENSP00000451284.1"/>
    <property type="gene ID" value="ENSG00000100968.14"/>
</dbReference>
<dbReference type="Ensembl" id="ENST00000557767.5">
    <molecule id="Q14934-24"/>
    <property type="protein sequence ID" value="ENSP00000451496.1"/>
    <property type="gene ID" value="ENSG00000100968.14"/>
</dbReference>
<dbReference type="Ensembl" id="ENST00000642182.1">
    <molecule id="Q14934-18"/>
    <property type="protein sequence ID" value="ENSP00000495011.1"/>
    <property type="gene ID" value="ENSG00000285485.2"/>
</dbReference>
<dbReference type="Ensembl" id="ENST00000642302.2">
    <molecule id="Q14934-1"/>
    <property type="protein sequence ID" value="ENSP00000494405.1"/>
    <property type="gene ID" value="ENSG00000285485.2"/>
</dbReference>
<dbReference type="Ensembl" id="ENST00000642423.1">
    <molecule id="Q14934-14"/>
    <property type="protein sequence ID" value="ENSP00000495052.1"/>
    <property type="gene ID" value="ENSG00000285485.2"/>
</dbReference>
<dbReference type="Ensembl" id="ENST00000642571.1">
    <molecule id="Q14934-4"/>
    <property type="protein sequence ID" value="ENSP00000493808.1"/>
    <property type="gene ID" value="ENSG00000285485.2"/>
</dbReference>
<dbReference type="Ensembl" id="ENST00000642650.1">
    <molecule id="Q14934-13"/>
    <property type="protein sequence ID" value="ENSP00000495758.1"/>
    <property type="gene ID" value="ENSG00000285485.2"/>
</dbReference>
<dbReference type="Ensembl" id="ENST00000643468.1">
    <molecule id="Q14934-12"/>
    <property type="protein sequence ID" value="ENSP00000494577.1"/>
    <property type="gene ID" value="ENSG00000285485.2"/>
</dbReference>
<dbReference type="Ensembl" id="ENST00000643679.1">
    <molecule id="Q14934-8"/>
    <property type="protein sequence ID" value="ENSP00000493557.1"/>
    <property type="gene ID" value="ENSG00000285485.2"/>
</dbReference>
<dbReference type="Ensembl" id="ENST00000643941.1">
    <molecule id="Q14934-9"/>
    <property type="protein sequence ID" value="ENSP00000493733.1"/>
    <property type="gene ID" value="ENSG00000285485.2"/>
</dbReference>
<dbReference type="Ensembl" id="ENST00000644025.1">
    <molecule id="Q14934-16"/>
    <property type="protein sequence ID" value="ENSP00000494705.1"/>
    <property type="gene ID" value="ENSG00000285485.2"/>
</dbReference>
<dbReference type="Ensembl" id="ENST00000644166.1">
    <molecule id="Q14934-7"/>
    <property type="protein sequence ID" value="ENSP00000496192.1"/>
    <property type="gene ID" value="ENSG00000285485.2"/>
</dbReference>
<dbReference type="Ensembl" id="ENST00000644182.1">
    <molecule id="Q14934-12"/>
    <property type="protein sequence ID" value="ENSP00000495766.1"/>
    <property type="gene ID" value="ENSG00000285485.2"/>
</dbReference>
<dbReference type="Ensembl" id="ENST00000644376.1">
    <molecule id="Q14934-3"/>
    <property type="protein sequence ID" value="ENSP00000493885.1"/>
    <property type="gene ID" value="ENSG00000285485.2"/>
</dbReference>
<dbReference type="Ensembl" id="ENST00000644583.1">
    <molecule id="Q14934-23"/>
    <property type="protein sequence ID" value="ENSP00000496733.1"/>
    <property type="gene ID" value="ENSG00000285485.2"/>
</dbReference>
<dbReference type="Ensembl" id="ENST00000644758.1">
    <molecule id="Q14934-6"/>
    <property type="protein sequence ID" value="ENSP00000495684.1"/>
    <property type="gene ID" value="ENSG00000285485.2"/>
</dbReference>
<dbReference type="Ensembl" id="ENST00000645116.1">
    <molecule id="Q14934-5"/>
    <property type="protein sequence ID" value="ENSP00000493851.1"/>
    <property type="gene ID" value="ENSG00000285485.2"/>
</dbReference>
<dbReference type="Ensembl" id="ENST00000645397.1">
    <molecule id="Q14934-19"/>
    <property type="protein sequence ID" value="ENSP00000493943.1"/>
    <property type="gene ID" value="ENSG00000285485.2"/>
</dbReference>
<dbReference type="Ensembl" id="ENST00000645587.1">
    <molecule id="Q14934-21"/>
    <property type="protein sequence ID" value="ENSP00000495213.1"/>
    <property type="gene ID" value="ENSG00000285485.2"/>
</dbReference>
<dbReference type="Ensembl" id="ENST00000645795.1">
    <molecule id="Q14934-20"/>
    <property type="protein sequence ID" value="ENSP00000495926.1"/>
    <property type="gene ID" value="ENSG00000285485.2"/>
</dbReference>
<dbReference type="Ensembl" id="ENST00000646023.1">
    <molecule id="Q14934-10"/>
    <property type="protein sequence ID" value="ENSP00000494993.1"/>
    <property type="gene ID" value="ENSG00000285485.2"/>
</dbReference>
<dbReference type="Ensembl" id="ENST00000646364.1">
    <molecule id="Q14934-15"/>
    <property type="protein sequence ID" value="ENSP00000496579.1"/>
    <property type="gene ID" value="ENSG00000285485.2"/>
</dbReference>
<dbReference type="Ensembl" id="ENST00000646650.1">
    <molecule id="Q14934-11"/>
    <property type="protein sequence ID" value="ENSP00000496777.1"/>
    <property type="gene ID" value="ENSG00000285485.2"/>
</dbReference>
<dbReference type="Ensembl" id="ENST00000646652.1">
    <molecule id="Q14934-24"/>
    <property type="protein sequence ID" value="ENSP00000496108.1"/>
    <property type="gene ID" value="ENSG00000285485.2"/>
</dbReference>
<dbReference type="Ensembl" id="ENST00000647017.1">
    <molecule id="Q14934-22"/>
    <property type="protein sequence ID" value="ENSP00000496558.1"/>
    <property type="gene ID" value="ENSG00000285485.2"/>
</dbReference>
<dbReference type="Ensembl" id="ENST00000647345.1">
    <molecule id="Q14934-17"/>
    <property type="protein sequence ID" value="ENSP00000493614.1"/>
    <property type="gene ID" value="ENSG00000285485.2"/>
</dbReference>
<dbReference type="GeneID" id="4776"/>
<dbReference type="KEGG" id="hsa:4776"/>
<dbReference type="MANE-Select" id="ENST00000250373.9">
    <property type="protein sequence ID" value="ENSP00000250373.4"/>
    <property type="RefSeq nucleotide sequence ID" value="NM_004554.5"/>
    <property type="RefSeq protein sequence ID" value="NP_004545.2"/>
</dbReference>
<dbReference type="UCSC" id="uc001wpc.5">
    <molecule id="Q14934-1"/>
    <property type="organism name" value="human"/>
</dbReference>
<dbReference type="AGR" id="HGNC:7778"/>
<dbReference type="CTD" id="4776"/>
<dbReference type="DisGeNET" id="4776"/>
<dbReference type="GeneCards" id="NFATC4"/>
<dbReference type="HGNC" id="HGNC:7778">
    <property type="gene designation" value="NFATC4"/>
</dbReference>
<dbReference type="HPA" id="ENSG00000100968">
    <property type="expression patterns" value="Low tissue specificity"/>
</dbReference>
<dbReference type="MIM" id="602699">
    <property type="type" value="gene"/>
</dbReference>
<dbReference type="neXtProt" id="NX_Q14934"/>
<dbReference type="OpenTargets" id="ENSG00000100968"/>
<dbReference type="PharmGKB" id="PA31584"/>
<dbReference type="VEuPathDB" id="HostDB:ENSG00000100968"/>
<dbReference type="eggNOG" id="ENOG502RIHQ">
    <property type="taxonomic scope" value="Eukaryota"/>
</dbReference>
<dbReference type="GeneTree" id="ENSGT00940000160923"/>
<dbReference type="HOGENOM" id="CLU_010185_2_0_1"/>
<dbReference type="InParanoid" id="Q14934"/>
<dbReference type="OMA" id="NMTAIDC"/>
<dbReference type="OrthoDB" id="5346094at2759"/>
<dbReference type="PAN-GO" id="Q14934">
    <property type="GO annotations" value="7 GO annotations based on evolutionary models"/>
</dbReference>
<dbReference type="PhylomeDB" id="Q14934"/>
<dbReference type="TreeFam" id="TF326480"/>
<dbReference type="PathwayCommons" id="Q14934"/>
<dbReference type="SABIO-RK" id="Q14934"/>
<dbReference type="SignaLink" id="Q14934"/>
<dbReference type="SIGNOR" id="Q14934"/>
<dbReference type="BioGRID-ORCS" id="4776">
    <property type="hits" value="13 hits in 1173 CRISPR screens"/>
</dbReference>
<dbReference type="ChiTaRS" id="NFATC4">
    <property type="organism name" value="human"/>
</dbReference>
<dbReference type="EvolutionaryTrace" id="Q14934"/>
<dbReference type="GeneWiki" id="NFATC4"/>
<dbReference type="GenomeRNAi" id="4776"/>
<dbReference type="Pharos" id="Q14934">
    <property type="development level" value="Tbio"/>
</dbReference>
<dbReference type="PRO" id="PR:Q14934"/>
<dbReference type="Proteomes" id="UP000005640">
    <property type="component" value="Chromosome 14"/>
</dbReference>
<dbReference type="RNAct" id="Q14934">
    <property type="molecule type" value="protein"/>
</dbReference>
<dbReference type="Bgee" id="ENSG00000100968">
    <property type="expression patterns" value="Expressed in endocervix and 94 other cell types or tissues"/>
</dbReference>
<dbReference type="ExpressionAtlas" id="Q14934">
    <property type="expression patterns" value="baseline and differential"/>
</dbReference>
<dbReference type="GO" id="GO:0000785">
    <property type="term" value="C:chromatin"/>
    <property type="evidence" value="ECO:0000247"/>
    <property type="project" value="NTNU_SB"/>
</dbReference>
<dbReference type="GO" id="GO:0005829">
    <property type="term" value="C:cytosol"/>
    <property type="evidence" value="ECO:0000314"/>
    <property type="project" value="HPA"/>
</dbReference>
<dbReference type="GO" id="GO:0016607">
    <property type="term" value="C:nuclear speck"/>
    <property type="evidence" value="ECO:0000314"/>
    <property type="project" value="HPA"/>
</dbReference>
<dbReference type="GO" id="GO:0005634">
    <property type="term" value="C:nucleus"/>
    <property type="evidence" value="ECO:0000314"/>
    <property type="project" value="MGI"/>
</dbReference>
<dbReference type="GO" id="GO:0005667">
    <property type="term" value="C:transcription regulator complex"/>
    <property type="evidence" value="ECO:0000318"/>
    <property type="project" value="GO_Central"/>
</dbReference>
<dbReference type="GO" id="GO:0000981">
    <property type="term" value="F:DNA-binding transcription factor activity, RNA polymerase II-specific"/>
    <property type="evidence" value="ECO:0000247"/>
    <property type="project" value="NTNU_SB"/>
</dbReference>
<dbReference type="GO" id="GO:0001227">
    <property type="term" value="F:DNA-binding transcription repressor activity, RNA polymerase II-specific"/>
    <property type="evidence" value="ECO:0000316"/>
    <property type="project" value="BHF-UCL"/>
</dbReference>
<dbReference type="GO" id="GO:0000978">
    <property type="term" value="F:RNA polymerase II cis-regulatory region sequence-specific DNA binding"/>
    <property type="evidence" value="ECO:0000318"/>
    <property type="project" value="GO_Central"/>
</dbReference>
<dbReference type="GO" id="GO:1990837">
    <property type="term" value="F:sequence-specific double-stranded DNA binding"/>
    <property type="evidence" value="ECO:0000314"/>
    <property type="project" value="ARUK-UCL"/>
</dbReference>
<dbReference type="GO" id="GO:0000976">
    <property type="term" value="F:transcription cis-regulatory region binding"/>
    <property type="evidence" value="ECO:0000250"/>
    <property type="project" value="UniProtKB"/>
</dbReference>
<dbReference type="GO" id="GO:0031547">
    <property type="term" value="P:brain-derived neurotrophic factor receptor signaling pathway"/>
    <property type="evidence" value="ECO:0000250"/>
    <property type="project" value="UniProtKB"/>
</dbReference>
<dbReference type="GO" id="GO:0001569">
    <property type="term" value="P:branching involved in blood vessel morphogenesis"/>
    <property type="evidence" value="ECO:0007669"/>
    <property type="project" value="Ensembl"/>
</dbReference>
<dbReference type="GO" id="GO:0033173">
    <property type="term" value="P:calcineurin-NFAT signaling cascade"/>
    <property type="evidence" value="ECO:0000318"/>
    <property type="project" value="GO_Central"/>
</dbReference>
<dbReference type="GO" id="GO:0045333">
    <property type="term" value="P:cellular respiration"/>
    <property type="evidence" value="ECO:0007669"/>
    <property type="project" value="Ensembl"/>
</dbReference>
<dbReference type="GO" id="GO:0071285">
    <property type="term" value="P:cellular response to lithium ion"/>
    <property type="evidence" value="ECO:0007669"/>
    <property type="project" value="Ensembl"/>
</dbReference>
<dbReference type="GO" id="GO:0034644">
    <property type="term" value="P:cellular response to UV"/>
    <property type="evidence" value="ECO:0007669"/>
    <property type="project" value="Ensembl"/>
</dbReference>
<dbReference type="GO" id="GO:0048813">
    <property type="term" value="P:dendrite morphogenesis"/>
    <property type="evidence" value="ECO:0007669"/>
    <property type="project" value="Ensembl"/>
</dbReference>
<dbReference type="GO" id="GO:0007507">
    <property type="term" value="P:heart development"/>
    <property type="evidence" value="ECO:0007669"/>
    <property type="project" value="Ensembl"/>
</dbReference>
<dbReference type="GO" id="GO:0006954">
    <property type="term" value="P:inflammatory response"/>
    <property type="evidence" value="ECO:0000304"/>
    <property type="project" value="ProtInc"/>
</dbReference>
<dbReference type="GO" id="GO:0008630">
    <property type="term" value="P:intrinsic apoptotic signaling pathway in response to DNA damage"/>
    <property type="evidence" value="ECO:0007669"/>
    <property type="project" value="Ensembl"/>
</dbReference>
<dbReference type="GO" id="GO:0007616">
    <property type="term" value="P:long-term memory"/>
    <property type="evidence" value="ECO:0000250"/>
    <property type="project" value="UniProtKB"/>
</dbReference>
<dbReference type="GO" id="GO:0060291">
    <property type="term" value="P:long-term synaptic potentiation"/>
    <property type="evidence" value="ECO:0000250"/>
    <property type="project" value="UniProtKB"/>
</dbReference>
<dbReference type="GO" id="GO:0050774">
    <property type="term" value="P:negative regulation of dendrite morphogenesis"/>
    <property type="evidence" value="ECO:0007669"/>
    <property type="project" value="Ensembl"/>
</dbReference>
<dbReference type="GO" id="GO:1902894">
    <property type="term" value="P:negative regulation of miRNA transcription"/>
    <property type="evidence" value="ECO:0000316"/>
    <property type="project" value="BHF-UCL"/>
</dbReference>
<dbReference type="GO" id="GO:0043524">
    <property type="term" value="P:negative regulation of neuron apoptotic process"/>
    <property type="evidence" value="ECO:0000250"/>
    <property type="project" value="UniProtKB"/>
</dbReference>
<dbReference type="GO" id="GO:2000297">
    <property type="term" value="P:negative regulation of synapse maturation"/>
    <property type="evidence" value="ECO:0007669"/>
    <property type="project" value="Ensembl"/>
</dbReference>
<dbReference type="GO" id="GO:0030178">
    <property type="term" value="P:negative regulation of Wnt signaling pathway"/>
    <property type="evidence" value="ECO:0007669"/>
    <property type="project" value="Ensembl"/>
</dbReference>
<dbReference type="GO" id="GO:0051402">
    <property type="term" value="P:neuron apoptotic process"/>
    <property type="evidence" value="ECO:0007669"/>
    <property type="project" value="Ensembl"/>
</dbReference>
<dbReference type="GO" id="GO:2001235">
    <property type="term" value="P:positive regulation of apoptotic signaling pathway"/>
    <property type="evidence" value="ECO:0007669"/>
    <property type="project" value="Ensembl"/>
</dbReference>
<dbReference type="GO" id="GO:0043525">
    <property type="term" value="P:positive regulation of neuron apoptotic process"/>
    <property type="evidence" value="ECO:0007669"/>
    <property type="project" value="Ensembl"/>
</dbReference>
<dbReference type="GO" id="GO:0045944">
    <property type="term" value="P:positive regulation of transcription by RNA polymerase II"/>
    <property type="evidence" value="ECO:0000250"/>
    <property type="project" value="UniProtKB"/>
</dbReference>
<dbReference type="GO" id="GO:0032760">
    <property type="term" value="P:positive regulation of tumor necrosis factor production"/>
    <property type="evidence" value="ECO:0007669"/>
    <property type="project" value="Ensembl"/>
</dbReference>
<dbReference type="GO" id="GO:0060074">
    <property type="term" value="P:synapse maturation"/>
    <property type="evidence" value="ECO:0007669"/>
    <property type="project" value="Ensembl"/>
</dbReference>
<dbReference type="GO" id="GO:0006366">
    <property type="term" value="P:transcription by RNA polymerase II"/>
    <property type="evidence" value="ECO:0007669"/>
    <property type="project" value="Ensembl"/>
</dbReference>
<dbReference type="GO" id="GO:0097084">
    <property type="term" value="P:vascular associated smooth muscle cell development"/>
    <property type="evidence" value="ECO:0007669"/>
    <property type="project" value="Ensembl"/>
</dbReference>
<dbReference type="CDD" id="cd01178">
    <property type="entry name" value="IPT_NFAT"/>
    <property type="match status" value="1"/>
</dbReference>
<dbReference type="CDD" id="cd07881">
    <property type="entry name" value="RHD-n_NFAT"/>
    <property type="match status" value="1"/>
</dbReference>
<dbReference type="FunFam" id="2.60.40.10:FF:000040">
    <property type="entry name" value="Nuclear factor of activated T-cells, cytoplasmic, calcineurin-dependent 2"/>
    <property type="match status" value="1"/>
</dbReference>
<dbReference type="FunFam" id="2.60.40.340:FF:000001">
    <property type="entry name" value="Nuclear factor of activated T-cells, cytoplasmic, calcineurin-dependent 2"/>
    <property type="match status" value="1"/>
</dbReference>
<dbReference type="Gene3D" id="2.60.40.10">
    <property type="entry name" value="Immunoglobulins"/>
    <property type="match status" value="1"/>
</dbReference>
<dbReference type="Gene3D" id="2.60.40.340">
    <property type="entry name" value="Rel homology domain (RHD), DNA-binding domain"/>
    <property type="match status" value="1"/>
</dbReference>
<dbReference type="IDEAL" id="IID00474"/>
<dbReference type="InterPro" id="IPR013783">
    <property type="entry name" value="Ig-like_fold"/>
</dbReference>
<dbReference type="InterPro" id="IPR014756">
    <property type="entry name" value="Ig_E-set"/>
</dbReference>
<dbReference type="InterPro" id="IPR002909">
    <property type="entry name" value="IPT_dom"/>
</dbReference>
<dbReference type="InterPro" id="IPR008366">
    <property type="entry name" value="NFAT"/>
</dbReference>
<dbReference type="InterPro" id="IPR008967">
    <property type="entry name" value="p53-like_TF_DNA-bd_sf"/>
</dbReference>
<dbReference type="InterPro" id="IPR032397">
    <property type="entry name" value="RHD_dimer"/>
</dbReference>
<dbReference type="InterPro" id="IPR011539">
    <property type="entry name" value="RHD_DNA_bind_dom"/>
</dbReference>
<dbReference type="InterPro" id="IPR037059">
    <property type="entry name" value="RHD_DNA_bind_dom_sf"/>
</dbReference>
<dbReference type="PANTHER" id="PTHR12533">
    <property type="entry name" value="NFAT"/>
    <property type="match status" value="1"/>
</dbReference>
<dbReference type="PANTHER" id="PTHR12533:SF11">
    <property type="entry name" value="NUCLEAR FACTOR OF ACTIVATED T-CELLS, CYTOPLASMIC 4"/>
    <property type="match status" value="1"/>
</dbReference>
<dbReference type="Pfam" id="PF16179">
    <property type="entry name" value="RHD_dimer"/>
    <property type="match status" value="1"/>
</dbReference>
<dbReference type="Pfam" id="PF00554">
    <property type="entry name" value="RHD_DNA_bind"/>
    <property type="match status" value="1"/>
</dbReference>
<dbReference type="PRINTS" id="PR01789">
    <property type="entry name" value="NUCFACTORATC"/>
</dbReference>
<dbReference type="SMART" id="SM00429">
    <property type="entry name" value="IPT"/>
    <property type="match status" value="1"/>
</dbReference>
<dbReference type="SUPFAM" id="SSF81296">
    <property type="entry name" value="E set domains"/>
    <property type="match status" value="1"/>
</dbReference>
<dbReference type="SUPFAM" id="SSF49417">
    <property type="entry name" value="p53-like transcription factors"/>
    <property type="match status" value="1"/>
</dbReference>
<dbReference type="PROSITE" id="PS50254">
    <property type="entry name" value="REL_2"/>
    <property type="match status" value="1"/>
</dbReference>
<organism>
    <name type="scientific">Homo sapiens</name>
    <name type="common">Human</name>
    <dbReference type="NCBI Taxonomy" id="9606"/>
    <lineage>
        <taxon>Eukaryota</taxon>
        <taxon>Metazoa</taxon>
        <taxon>Chordata</taxon>
        <taxon>Craniata</taxon>
        <taxon>Vertebrata</taxon>
        <taxon>Euteleostomi</taxon>
        <taxon>Mammalia</taxon>
        <taxon>Eutheria</taxon>
        <taxon>Euarchontoglires</taxon>
        <taxon>Primates</taxon>
        <taxon>Haplorrhini</taxon>
        <taxon>Catarrhini</taxon>
        <taxon>Hominidae</taxon>
        <taxon>Homo</taxon>
    </lineage>
</organism>
<feature type="chain" id="PRO_0000205182" description="Nuclear factor of activated T-cells, cytoplasmic 4">
    <location>
        <begin position="1"/>
        <end position="902"/>
    </location>
</feature>
<feature type="repeat" description="SP 1">
    <location>
        <begin position="213"/>
        <end position="229"/>
    </location>
</feature>
<feature type="repeat" description="SP 2; approximate">
    <location>
        <begin position="277"/>
        <end position="293"/>
    </location>
</feature>
<feature type="domain" description="RHD" evidence="4">
    <location>
        <begin position="401"/>
        <end position="582"/>
    </location>
</feature>
<feature type="domain" description="IPT/TIG">
    <location>
        <begin position="586"/>
        <end position="683"/>
    </location>
</feature>
<feature type="DNA-binding region">
    <location>
        <begin position="430"/>
        <end position="437"/>
    </location>
</feature>
<feature type="region of interest" description="Disordered" evidence="5">
    <location>
        <begin position="16"/>
        <end position="180"/>
    </location>
</feature>
<feature type="region of interest" description="Calcineurin-binding">
    <location>
        <begin position="114"/>
        <end position="119"/>
    </location>
</feature>
<feature type="region of interest" description="Disordered" evidence="5">
    <location>
        <begin position="208"/>
        <end position="369"/>
    </location>
</feature>
<feature type="region of interest" description="2 approximate SP repeats">
    <location>
        <begin position="213"/>
        <end position="293"/>
    </location>
</feature>
<feature type="region of interest" description="Disordered" evidence="5">
    <location>
        <begin position="791"/>
        <end position="870"/>
    </location>
</feature>
<feature type="short sequence motif" description="Nuclear localization signal">
    <location>
        <begin position="268"/>
        <end position="270"/>
    </location>
</feature>
<feature type="short sequence motif" description="Nuclear localization signal">
    <location>
        <begin position="672"/>
        <end position="674"/>
    </location>
</feature>
<feature type="compositionally biased region" description="Pro residues" evidence="5">
    <location>
        <begin position="50"/>
        <end position="81"/>
    </location>
</feature>
<feature type="compositionally biased region" description="Gly residues" evidence="5">
    <location>
        <begin position="96"/>
        <end position="109"/>
    </location>
</feature>
<feature type="compositionally biased region" description="Gly residues" evidence="5">
    <location>
        <begin position="151"/>
        <end position="165"/>
    </location>
</feature>
<feature type="compositionally biased region" description="Low complexity" evidence="5">
    <location>
        <begin position="166"/>
        <end position="180"/>
    </location>
</feature>
<feature type="compositionally biased region" description="Pro residues" evidence="5">
    <location>
        <begin position="215"/>
        <end position="227"/>
    </location>
</feature>
<feature type="compositionally biased region" description="Pro residues" evidence="5">
    <location>
        <begin position="254"/>
        <end position="263"/>
    </location>
</feature>
<feature type="compositionally biased region" description="Low complexity" evidence="5">
    <location>
        <begin position="272"/>
        <end position="288"/>
    </location>
</feature>
<feature type="compositionally biased region" description="Pro residues" evidence="5">
    <location>
        <begin position="805"/>
        <end position="824"/>
    </location>
</feature>
<feature type="modified residue" description="Phosphoserine; by MAPK7 and MAPK14" evidence="7 13">
    <location>
        <position position="168"/>
    </location>
</feature>
<feature type="modified residue" description="Phosphoserine; by MAPK7 and MAPK14" evidence="7 13">
    <location>
        <position position="170"/>
    </location>
</feature>
<feature type="modified residue" description="Phosphoserine; by MAPK8 and MAPK9" evidence="11">
    <location>
        <position position="213"/>
    </location>
</feature>
<feature type="modified residue" description="Phosphoserine; by MAPK8 and MAPK9" evidence="11">
    <location>
        <position position="217"/>
    </location>
</feature>
<feature type="modified residue" description="Phosphoserine; by RPS6KA3" evidence="10">
    <location>
        <position position="289"/>
    </location>
</feature>
<feature type="modified residue" description="Phosphoserine; by RPS6KA3" evidence="10">
    <location>
        <position position="344"/>
    </location>
</feature>
<feature type="cross-link" description="Glycyl lysine isopeptide (Lys-Gly) (interchain with G-Cter in SUMO2)" evidence="27">
    <location>
        <position position="689"/>
    </location>
</feature>
<feature type="splice variant" id="VSP_036697" description="In isoform 22, isoform 23 and isoform 24." evidence="24">
    <location>
        <begin position="1"/>
        <end position="712"/>
    </location>
</feature>
<feature type="splice variant" id="VSP_036698" description="In isoform 19, isoform 20 and isoform 21." evidence="24">
    <location>
        <begin position="1"/>
        <end position="465"/>
    </location>
</feature>
<feature type="splice variant" id="VSP_036699" description="In isoform 12, isoform 13 and isoform 18." evidence="20 24">
    <location>
        <begin position="1"/>
        <end position="70"/>
    </location>
</feature>
<feature type="splice variant" id="VSP_036700" description="In isoform 9, isoform 10 and isoform 17." evidence="24">
    <original>MGAASCEDEELEFKLVFGEEKEAPPLGAGGLG</original>
    <variation>MPASISSIFPGPTLLLSCGS</variation>
    <location>
        <begin position="1"/>
        <end position="32"/>
    </location>
</feature>
<feature type="splice variant" id="VSP_036701" description="In isoform 2, isoform 3 and isoform 11." evidence="24">
    <original>M</original>
    <variation>MITTLPSLLPASLASISHRVTNLPSNSLSHNPGLSKPDFPGNSSPGLPSSSSPGRDLGAPAGSM</variation>
    <location>
        <position position="1"/>
    </location>
</feature>
<feature type="splice variant" id="VSP_036702" description="In isoform 4, isoform 5 and isoform 14." evidence="24">
    <original>M</original>
    <variation>MADGGADSAAQRLPEGPGRVAPGRDLGAPAGSM</variation>
    <location>
        <position position="1"/>
    </location>
</feature>
<feature type="splice variant" id="VSP_036703" description="In isoform 6, isoform 7 and isoform 15." evidence="24">
    <original>M</original>
    <variation>MLSGRDLGAPAGSM</variation>
    <location>
        <position position="1"/>
    </location>
</feature>
<feature type="splice variant" id="VSP_036704" description="In isoform 11, isoform 14, isoform 15, isoform 16, isoform 17, isoform 18, isoform 21 and isoform 24." evidence="20 24">
    <location>
        <begin position="773"/>
        <end position="880"/>
    </location>
</feature>
<feature type="splice variant" id="VSP_036705" description="In isoform 3, isoform 5, isoform 7, isoform 8, isoform 10, isoform 13, isoform 20 and isoform 23." evidence="24">
    <original>VSEIIGRDLSGFPAPPGEEPPA</original>
    <variation>GGCGTGGCECECVQEIALHVC</variation>
    <location>
        <begin position="881"/>
        <end position="902"/>
    </location>
</feature>
<feature type="sequence variant" id="VAR_046985" description="In dbSNP:rs2229309." evidence="9 19">
    <original>G</original>
    <variation>A</variation>
    <location>
        <position position="160"/>
    </location>
</feature>
<feature type="sequence variant" id="VAR_046986" description="In dbSNP:rs2228231.">
    <original>S</original>
    <variation>N</variation>
    <location>
        <position position="246"/>
    </location>
</feature>
<feature type="sequence variant" id="VAR_046987" description="In dbSNP:rs7149586." evidence="9 19">
    <original>S</original>
    <variation>P</variation>
    <location>
        <position position="800"/>
    </location>
</feature>
<feature type="mutagenesis site" description="Promotes nuclear localization and increases transcriptional activity; when associated with A-170." evidence="7">
    <original>S</original>
    <variation>A</variation>
    <location>
        <position position="168"/>
    </location>
</feature>
<feature type="mutagenesis site" description="Promotes nuclear localization and increases transcriptional activity; when associated with A-168." evidence="7">
    <original>S</original>
    <variation>A</variation>
    <location>
        <position position="170"/>
    </location>
</feature>
<feature type="mutagenesis site" description="Marked decrease in phosphorylation by MAPK8 or MAPK9. Complete loss of phosphorylation by MAPK8 or MAPK9, but no effect on MAPK8/9-binding; when associated with A-217. Decreased transcriptional activity; when associated with A-217." evidence="11">
    <original>S</original>
    <variation>A</variation>
    <location>
        <position position="213"/>
    </location>
</feature>
<feature type="mutagenesis site" description="Marked decrease in phosphorylation by MAPK8 or MAPK9. Complete loss of phosphorylation by MAPK8 or MAPK9, but no effect on MAPK8/9-binding; when associated with A-213. Decreased transcriptional activity; when associated with A-213." evidence="11">
    <original>S</original>
    <variation>A</variation>
    <location>
        <position position="217"/>
    </location>
</feature>
<feature type="sequence conflict" description="In Ref. 3; BAG56726." evidence="26" ref="3">
    <original>E</original>
    <variation>K</variation>
    <location>
        <position position="359"/>
    </location>
</feature>
<feature type="sequence conflict" description="In Ref. 3; BAG63617." evidence="26" ref="3">
    <original>L</original>
    <variation>P</variation>
    <location>
        <position position="646"/>
    </location>
</feature>
<feature type="strand" evidence="28">
    <location>
        <begin position="587"/>
        <end position="594"/>
    </location>
</feature>
<feature type="strand" evidence="28">
    <location>
        <begin position="602"/>
        <end position="610"/>
    </location>
</feature>
<feature type="strand" evidence="28">
    <location>
        <begin position="616"/>
        <end position="620"/>
    </location>
</feature>
<feature type="turn" evidence="28">
    <location>
        <begin position="638"/>
        <end position="640"/>
    </location>
</feature>
<feature type="strand" evidence="28">
    <location>
        <begin position="645"/>
        <end position="649"/>
    </location>
</feature>
<feature type="strand" evidence="28">
    <location>
        <begin position="662"/>
        <end position="669"/>
    </location>
</feature>
<feature type="strand" evidence="28">
    <location>
        <begin position="671"/>
        <end position="673"/>
    </location>
</feature>
<feature type="strand" evidence="28">
    <location>
        <begin position="679"/>
        <end position="684"/>
    </location>
</feature>
<feature type="strand" evidence="28">
    <location>
        <begin position="687"/>
        <end position="689"/>
    </location>
</feature>
<keyword id="KW-0002">3D-structure</keyword>
<keyword id="KW-0010">Activator</keyword>
<keyword id="KW-0025">Alternative splicing</keyword>
<keyword id="KW-0963">Cytoplasm</keyword>
<keyword id="KW-0217">Developmental protein</keyword>
<keyword id="KW-0221">Differentiation</keyword>
<keyword id="KW-0238">DNA-binding</keyword>
<keyword id="KW-1017">Isopeptide bond</keyword>
<keyword id="KW-0539">Nucleus</keyword>
<keyword id="KW-0597">Phosphoprotein</keyword>
<keyword id="KW-1267">Proteomics identification</keyword>
<keyword id="KW-1185">Reference proteome</keyword>
<keyword id="KW-0677">Repeat</keyword>
<keyword id="KW-0804">Transcription</keyword>
<keyword id="KW-0805">Transcription regulation</keyword>
<keyword id="KW-0832">Ubl conjugation</keyword>
<accession>Q14934</accession>
<accession>B4DDG5</accession>
<accession>B4DY55</accession>
<accession>B5B2U7</accession>
<accession>B5B2U8</accession>
<accession>B5B2U9</accession>
<accession>B5B2V0</accession>
<accession>B5B2V1</accession>
<accession>B5B2V2</accession>
<accession>B5B2V3</accession>
<accession>B5B2V4</accession>
<accession>B5B2V5</accession>
<accession>B5B2V7</accession>
<accession>B5B2V8</accession>
<accession>B5B2V9</accession>
<accession>B5B2W0</accession>
<accession>B5B2W1</accession>
<accession>B5B2W2</accession>
<accession>B5B2W3</accession>
<accession>B5B2W4</accession>
<accession>B5B2W5</accession>
<accession>B5B2W6</accession>
<accession>B5B2W7</accession>
<accession>B5B2W8</accession>
<accession>B5B2W9</accession>
<accession>B5B2X0</accession>
<accession>Q7Z598</accession>
<accession>Q96H68</accession>
<comment type="function">
    <text evidence="1 3 6 7 10 11 13 14 18 19 26">Ca(2+)-regulated transcription factor that is involved in several processes, including the development and function of the immune, cardiovascular, musculoskeletal, and nervous systems (PubMed:11514544, PubMed:11997522, PubMed:17213202, PubMed:17875713, PubMed:18668201, PubMed:25663301, PubMed:7749981). Involved in T-cell activation, stimulating the transcription of cytokine genes, including that of IL2 and IL4 (PubMed:18347059, PubMed:18668201, PubMed:7749981). Along with NFATC3, involved in embryonic heart development. Following JAK/STAT signaling activation and as part of a complex with NFATC3 and STAT3, binds to the alpha-beta E4 promoter region of CRYAB and activates transcription in cardiomyocytes (By similarity). Involved in mitochondrial energy metabolism required for cardiac morphogenesis and function (By similarity). Transactivates many genes involved in the cardiovascular system, including AGTR2, NPPB/BNP (in synergy with GATA4), NPPA/ANP/ANF and MYH7/beta-MHC (By similarity). Involved in the regulation of adult hippocampal neurogenesis. Involved in BDNF-driven pro-survival signaling in hippocampal adult-born neurons. Involved in the formation of long-term spatial memory and long-term potentiation (By similarity). In cochlear nucleus neurons, may play a role in deafferentation-induced apoptosis during the developmental critical period, when auditory neurons depend on afferent input for survival (By similarity). Binds to and activates the BACE1/Beta-secretase 1 promoter, hence may regulate the proteolytic processing of the amyloid precursor protein (APP) (PubMed:25663301). Plays a role in adipocyte differentiation (PubMed:11997522). May be involved in myoblast differentiation into myotubes (PubMed:17213202). Binds the consensus DNA sequence 5'-GGAAAAT-3' (Probable). In the presence of CREBBP, activates TNF transcription (PubMed:11514544). Binds to PPARG gene promoter and regulates its activity (PubMed:11997522). Binds to PPARG and REG3G gene promoters (By similarity).</text>
</comment>
<comment type="activity regulation">
    <text evidence="14">Transcriptional activity may be repressed by ESR1 and ESR2.</text>
</comment>
<comment type="subunit">
    <text evidence="1 3 6 10 11 12 13 14 16 19">Member of the multicomponent NFATC transcription complex that consists of at least two components, a pre-existing cytoplasmic component NFATC2 and an inducible nuclear component NFATC1. Other NFAT proteins, such as NFATC3, or members of the activating protein-1 (AP-1) family and MAF can also bind the complex. NFAT proteins can bind DNA as monomers or dimers (PubMed:7749981). Component of a promoter-binding complex composed of STAT3, NFATC3 and NFATC4; complex formation is enhanced by calcineurin (By similarity). Interacts with CREBBP; this interaction potentiates transcription activation (PubMed:11514544). Interacts with MAPK8/JNK1 and MAPK9/JNK2 (PubMed:17875713). Interacts with GATA4 (via the second Zn finger) (By similarity). Interacts (via N-terminus) with IRAK1 (via C-terminus) (PubMed:18691762). Interacts with RPS6KA3 (PubMed:17213202). Interacts with HOMER1, HOMER2 and HOMER3; this interaction competes with calcineurin/PPP3CA-binding and hence prevents NFATC4 dephosphorylation and activation (PubMed:18218901). Interacts with ESR1 and ESR2; this interaction decreases NFATC4 transcriptional activity (PubMed:18668201). Interacts with MTOR and MAPK7/ERK5 (PubMed:18347059). Interacts with TRIM17; this interaction prevents NFATC3 nuclear localization (By similarity). Interacts with TCF25 (via C-terminus); the interaction leads to suppression of NFATC4 transcription factor activity and is reduced following stimulation with angiotensin-2 (By similarity).</text>
</comment>
<comment type="interaction">
    <interactant intactId="EBI-3905796">
        <id>Q14934</id>
    </interactant>
    <interactant intactId="EBI-3390054">
        <id>P0CG48</id>
        <label>UBC</label>
    </interactant>
    <organismsDiffer>false</organismsDiffer>
    <experiments>3</experiments>
</comment>
<comment type="subcellular location">
    <subcellularLocation>
        <location evidence="7 10 13 14">Cytoplasm</location>
    </subcellularLocation>
    <subcellularLocation>
        <location evidence="7 8 10 13 14 16">Nucleus</location>
    </subcellularLocation>
    <text evidence="7 13">When hyperphosphorylated, localizes in the cytosol. When intracellular Ca(2+) levels increase, dephosphorylation by calcineurin/PPP3CA leads to translocation into the nucleus (PubMed:11997522, PubMed:18347059). MAPK7/ERK5 and MTOR regulate NFATC4 nuclear export through phosphorylation at Ser-168 and Ser-170 (PubMed:18347059).</text>
</comment>
<comment type="alternative products">
    <event type="alternative splicing"/>
    <isoform>
        <id>Q14934-1</id>
        <name>1</name>
        <name>ID-IXL</name>
        <sequence type="displayed"/>
    </isoform>
    <isoform>
        <id>Q14934-2</id>
        <name>2</name>
        <name>IA-IXL</name>
        <sequence type="described" ref="VSP_036701"/>
    </isoform>
    <isoform>
        <id>Q14934-3</id>
        <name>3</name>
        <name>IA-IXi</name>
        <sequence type="described" ref="VSP_036701 VSP_036705"/>
    </isoform>
    <isoform>
        <id>Q14934-4</id>
        <name>4</name>
        <name>IC-IXL</name>
        <sequence type="described" ref="VSP_036702"/>
    </isoform>
    <isoform>
        <id>Q14934-5</id>
        <name>5</name>
        <name>IC-IXi</name>
        <sequence type="described" ref="VSP_036702 VSP_036705"/>
    </isoform>
    <isoform>
        <id>Q14934-6</id>
        <name>6</name>
        <name>IB-IXL</name>
        <sequence type="described" ref="VSP_036703"/>
    </isoform>
    <isoform>
        <id>Q14934-7</id>
        <name>7</name>
        <name>IB-IXi</name>
        <sequence type="described" ref="VSP_036703 VSP_036705"/>
    </isoform>
    <isoform>
        <id>Q14934-8</id>
        <name>8</name>
        <name>ID-IXi</name>
        <sequence type="described" ref="VSP_036705"/>
    </isoform>
    <isoform>
        <id>Q14934-9</id>
        <name>9</name>
        <name>IE-IXL</name>
        <sequence type="described" ref="VSP_036700"/>
    </isoform>
    <isoform>
        <id>Q14934-10</id>
        <name>10</name>
        <name>IE-IXi</name>
        <sequence type="described" ref="VSP_036700 VSP_036705"/>
    </isoform>
    <isoform>
        <id>Q14934-11</id>
        <name>11</name>
        <name>IA-IXS</name>
        <sequence type="described" ref="VSP_036701 VSP_036704"/>
    </isoform>
    <isoform>
        <id>Q14934-12</id>
        <name>12</name>
        <name>IEi-IXL</name>
        <sequence type="described" ref="VSP_036699"/>
    </isoform>
    <isoform>
        <id>Q14934-13</id>
        <name>13</name>
        <name>IEi-IXi</name>
        <sequence type="described" ref="VSP_036699 VSP_036705"/>
    </isoform>
    <isoform>
        <id>Q14934-14</id>
        <name>14</name>
        <name>IC-IXS</name>
        <sequence type="described" ref="VSP_036702 VSP_036704"/>
    </isoform>
    <isoform>
        <id>Q14934-15</id>
        <name>15</name>
        <name>IB-IXS</name>
        <sequence type="described" ref="VSP_036703 VSP_036704"/>
    </isoform>
    <isoform>
        <id>Q14934-16</id>
        <name>16</name>
        <name>ID-IXS</name>
        <sequence type="described" ref="VSP_036704"/>
    </isoform>
    <isoform>
        <id>Q14934-17</id>
        <name>17</name>
        <name>IE-IXS</name>
        <sequence type="described" ref="VSP_036700 VSP_036704"/>
    </isoform>
    <isoform>
        <id>Q14934-18</id>
        <name>18</name>
        <name>IEi-IXS</name>
        <sequence type="described" ref="VSP_036699 VSP_036704"/>
    </isoform>
    <isoform>
        <id>Q14934-19</id>
        <name>19</name>
        <name>IV-IXL</name>
        <sequence type="described" ref="VSP_036698"/>
    </isoform>
    <isoform>
        <id>Q14934-20</id>
        <name>20</name>
        <name>IV-IXi</name>
        <sequence type="described" ref="VSP_036698 VSP_036705"/>
    </isoform>
    <isoform>
        <id>Q14934-21</id>
        <name>21</name>
        <name>IV-IXS</name>
        <sequence type="described" ref="VSP_036698 VSP_036704"/>
    </isoform>
    <isoform>
        <id>Q14934-22</id>
        <name>22</name>
        <name>VI-IXL</name>
        <sequence type="described" ref="VSP_036697"/>
    </isoform>
    <isoform>
        <id>Q14934-23</id>
        <name>23</name>
        <name>VI-IXi</name>
        <sequence type="described" ref="VSP_036697 VSP_036705"/>
    </isoform>
    <isoform>
        <id>Q14934-24</id>
        <name>24</name>
        <name>VI-IXS</name>
        <sequence type="described" ref="VSP_036697 VSP_036704"/>
    </isoform>
</comment>
<comment type="tissue specificity">
    <text evidence="8 15">Widely expressed, with high levels in placenta, lung, kidney, testis and ovary (PubMed:18675896). Weakly expressed in spleen and thymus (PubMed:18675896). In the hippocampus, expressed in the granular layer of the dentate gyrus, in the pyramidal neurons of CA3 region, and in the hippocampal fissure (PubMed:18675896). Expressed in the heart (at protein level) (PubMed:12370307).</text>
</comment>
<comment type="domain">
    <text evidence="2">Rel similarity domain (RSD) or Rel homology domain (RHD) allows DNA-binding and cooperative interactions with AP-1 factors.</text>
</comment>
<comment type="PTM">
    <text evidence="1 7 10 11 13">Phosphorylated by NFATC-kinases; dephosphorylated by calcineurin/PPP3CA. Phosphorylated on Ser-168 and Ser-170 by MTOR, IRAK1, MAPK7/ERK5 and MAPK14/p38, on Ser-213 and Ser-217 by MAPK8/JNK1 and MAPK9/JNK2, and on Ser-289 and Ser-344 by RPS6KA3 (PubMed:11997522, PubMed:17213202, PubMed:17875713, PubMed:18347059). Phosphorylated by GSK3B (PubMed:18347059). Phosphorylation by GSK3B markedly increases NFATC4 ubiquitination (By similarity). Phosphorylation at Ser-168 and Ser-170 is stimulated by UV irradiation (PubMed:18347059). Phosphorylation determines subcellular location: the hyperphosphorylated protein is cytosolic, while the dephosphorylated form is targeted to the nucleus.</text>
</comment>
<comment type="PTM">
    <text evidence="17">Ubiquitinated, leading to degradation by the proteasome. Ubiquitination may be stimulated by GSK3B-dependent phosphorylation. Polyubiquitin linkage mainly occurs through 'Lys-48'.</text>
</comment>
<comment type="miscellaneous">
    <molecule>Isoform 3</molecule>
    <text evidence="26">Due to an intron retention.</text>
</comment>
<comment type="miscellaneous">
    <molecule>Isoform 5</molecule>
    <text evidence="26">Due to an intron retention.</text>
</comment>
<comment type="miscellaneous">
    <molecule>Isoform 7</molecule>
    <text evidence="26">Due to an intron retention.</text>
</comment>
<comment type="miscellaneous">
    <molecule>Isoform 8</molecule>
    <text evidence="26">Due to an intron retention.</text>
</comment>
<comment type="miscellaneous">
    <molecule>Isoform 10</molecule>
    <text evidence="26">Due to an intron retention.</text>
</comment>
<comment type="miscellaneous">
    <molecule>Isoform 12</molecule>
    <text evidence="26">Due to an intron retention.</text>
</comment>
<comment type="miscellaneous">
    <molecule>Isoform 13</molecule>
    <text evidence="26">Due to an intron retention.</text>
</comment>
<comment type="miscellaneous">
    <molecule>Isoform 18</molecule>
    <text evidence="26">Due to an intron retention.</text>
</comment>
<comment type="miscellaneous">
    <molecule>Isoform 20</molecule>
    <text evidence="26">Due to an intron retention.</text>
</comment>
<comment type="miscellaneous">
    <molecule>Isoform 23</molecule>
    <text evidence="26">Due to an intron retention.</text>
</comment>
<evidence type="ECO:0000250" key="1">
    <source>
        <dbReference type="UniProtKB" id="D3Z9H7"/>
    </source>
</evidence>
<evidence type="ECO:0000250" key="2">
    <source>
        <dbReference type="UniProtKB" id="O95644"/>
    </source>
</evidence>
<evidence type="ECO:0000250" key="3">
    <source>
        <dbReference type="UniProtKB" id="Q8K120"/>
    </source>
</evidence>
<evidence type="ECO:0000255" key="4">
    <source>
        <dbReference type="PROSITE-ProRule" id="PRU00265"/>
    </source>
</evidence>
<evidence type="ECO:0000256" key="5">
    <source>
        <dbReference type="SAM" id="MobiDB-lite"/>
    </source>
</evidence>
<evidence type="ECO:0000269" key="6">
    <source>
    </source>
</evidence>
<evidence type="ECO:0000269" key="7">
    <source>
    </source>
</evidence>
<evidence type="ECO:0000269" key="8">
    <source>
    </source>
</evidence>
<evidence type="ECO:0000269" key="9">
    <source>
    </source>
</evidence>
<evidence type="ECO:0000269" key="10">
    <source>
    </source>
</evidence>
<evidence type="ECO:0000269" key="11">
    <source>
    </source>
</evidence>
<evidence type="ECO:0000269" key="12">
    <source>
    </source>
</evidence>
<evidence type="ECO:0000269" key="13">
    <source>
    </source>
</evidence>
<evidence type="ECO:0000269" key="14">
    <source>
    </source>
</evidence>
<evidence type="ECO:0000269" key="15">
    <source>
    </source>
</evidence>
<evidence type="ECO:0000269" key="16">
    <source>
    </source>
</evidence>
<evidence type="ECO:0000269" key="17">
    <source>
    </source>
</evidence>
<evidence type="ECO:0000269" key="18">
    <source>
    </source>
</evidence>
<evidence type="ECO:0000269" key="19">
    <source>
    </source>
</evidence>
<evidence type="ECO:0000303" key="20">
    <source>
    </source>
</evidence>
<evidence type="ECO:0000303" key="21">
    <source>
    </source>
</evidence>
<evidence type="ECO:0000303" key="22">
    <source>
    </source>
</evidence>
<evidence type="ECO:0000303" key="23">
    <source>
    </source>
</evidence>
<evidence type="ECO:0000303" key="24">
    <source>
    </source>
</evidence>
<evidence type="ECO:0000303" key="25">
    <source>
    </source>
</evidence>
<evidence type="ECO:0000305" key="26"/>
<evidence type="ECO:0007744" key="27">
    <source>
    </source>
</evidence>
<evidence type="ECO:0007829" key="28">
    <source>
        <dbReference type="PDB" id="2YRP"/>
    </source>
</evidence>
<reference key="1">
    <citation type="journal article" date="1995" name="Immunity">
        <title>Isolation of two new members of the NF-AT gene family and functional characterization of the NF-AT proteins.</title>
        <authorList>
            <person name="Hoey T."/>
            <person name="Sun Y.-L."/>
            <person name="Williamson K."/>
            <person name="Xu X."/>
        </authorList>
    </citation>
    <scope>NUCLEOTIDE SEQUENCE [MRNA] (ISOFORM 1)</scope>
    <scope>FUNCTION</scope>
    <scope>SUBUNIT</scope>
    <scope>VARIANTS ALA-160 AND PRO-800</scope>
    <source>
        <tissue>T-cell</tissue>
    </source>
</reference>
<reference key="2">
    <citation type="journal article" date="2008" name="Genomics">
        <title>Alternative splicing and expression of human and mouse NFAT genes.</title>
        <authorList>
            <person name="Vihma H."/>
            <person name="Pruunsild P."/>
            <person name="Timmusk T."/>
        </authorList>
    </citation>
    <scope>NUCLEOTIDE SEQUENCE [MRNA] (ISOFORMS 1; 2; 3; 4; 5; 6; 7; 8; 9; 10; 11; 12; 13; 14; 15; 16; 17; 18; 19; 20; 21; 22; 23 AND 24)</scope>
    <scope>TISSUE SPECIFICITY</scope>
</reference>
<reference key="3">
    <citation type="journal article" date="2004" name="Nat. Genet.">
        <title>Complete sequencing and characterization of 21,243 full-length human cDNAs.</title>
        <authorList>
            <person name="Ota T."/>
            <person name="Suzuki Y."/>
            <person name="Nishikawa T."/>
            <person name="Otsuki T."/>
            <person name="Sugiyama T."/>
            <person name="Irie R."/>
            <person name="Wakamatsu A."/>
            <person name="Hayashi K."/>
            <person name="Sato H."/>
            <person name="Nagai K."/>
            <person name="Kimura K."/>
            <person name="Makita H."/>
            <person name="Sekine M."/>
            <person name="Obayashi M."/>
            <person name="Nishi T."/>
            <person name="Shibahara T."/>
            <person name="Tanaka T."/>
            <person name="Ishii S."/>
            <person name="Yamamoto J."/>
            <person name="Saito K."/>
            <person name="Kawai Y."/>
            <person name="Isono Y."/>
            <person name="Nakamura Y."/>
            <person name="Nagahari K."/>
            <person name="Murakami K."/>
            <person name="Yasuda T."/>
            <person name="Iwayanagi T."/>
            <person name="Wagatsuma M."/>
            <person name="Shiratori A."/>
            <person name="Sudo H."/>
            <person name="Hosoiri T."/>
            <person name="Kaku Y."/>
            <person name="Kodaira H."/>
            <person name="Kondo H."/>
            <person name="Sugawara M."/>
            <person name="Takahashi M."/>
            <person name="Kanda K."/>
            <person name="Yokoi T."/>
            <person name="Furuya T."/>
            <person name="Kikkawa E."/>
            <person name="Omura Y."/>
            <person name="Abe K."/>
            <person name="Kamihara K."/>
            <person name="Katsuta N."/>
            <person name="Sato K."/>
            <person name="Tanikawa M."/>
            <person name="Yamazaki M."/>
            <person name="Ninomiya K."/>
            <person name="Ishibashi T."/>
            <person name="Yamashita H."/>
            <person name="Murakawa K."/>
            <person name="Fujimori K."/>
            <person name="Tanai H."/>
            <person name="Kimata M."/>
            <person name="Watanabe M."/>
            <person name="Hiraoka S."/>
            <person name="Chiba Y."/>
            <person name="Ishida S."/>
            <person name="Ono Y."/>
            <person name="Takiguchi S."/>
            <person name="Watanabe S."/>
            <person name="Yosida M."/>
            <person name="Hotuta T."/>
            <person name="Kusano J."/>
            <person name="Kanehori K."/>
            <person name="Takahashi-Fujii A."/>
            <person name="Hara H."/>
            <person name="Tanase T.-O."/>
            <person name="Nomura Y."/>
            <person name="Togiya S."/>
            <person name="Komai F."/>
            <person name="Hara R."/>
            <person name="Takeuchi K."/>
            <person name="Arita M."/>
            <person name="Imose N."/>
            <person name="Musashino K."/>
            <person name="Yuuki H."/>
            <person name="Oshima A."/>
            <person name="Sasaki N."/>
            <person name="Aotsuka S."/>
            <person name="Yoshikawa Y."/>
            <person name="Matsunawa H."/>
            <person name="Ichihara T."/>
            <person name="Shiohata N."/>
            <person name="Sano S."/>
            <person name="Moriya S."/>
            <person name="Momiyama H."/>
            <person name="Satoh N."/>
            <person name="Takami S."/>
            <person name="Terashima Y."/>
            <person name="Suzuki O."/>
            <person name="Nakagawa S."/>
            <person name="Senoh A."/>
            <person name="Mizoguchi H."/>
            <person name="Goto Y."/>
            <person name="Shimizu F."/>
            <person name="Wakebe H."/>
            <person name="Hishigaki H."/>
            <person name="Watanabe T."/>
            <person name="Sugiyama A."/>
            <person name="Takemoto M."/>
            <person name="Kawakami B."/>
            <person name="Yamazaki M."/>
            <person name="Watanabe K."/>
            <person name="Kumagai A."/>
            <person name="Itakura S."/>
            <person name="Fukuzumi Y."/>
            <person name="Fujimori Y."/>
            <person name="Komiyama M."/>
            <person name="Tashiro H."/>
            <person name="Tanigami A."/>
            <person name="Fujiwara T."/>
            <person name="Ono T."/>
            <person name="Yamada K."/>
            <person name="Fujii Y."/>
            <person name="Ozaki K."/>
            <person name="Hirao M."/>
            <person name="Ohmori Y."/>
            <person name="Kawabata A."/>
            <person name="Hikiji T."/>
            <person name="Kobatake N."/>
            <person name="Inagaki H."/>
            <person name="Ikema Y."/>
            <person name="Okamoto S."/>
            <person name="Okitani R."/>
            <person name="Kawakami T."/>
            <person name="Noguchi S."/>
            <person name="Itoh T."/>
            <person name="Shigeta K."/>
            <person name="Senba T."/>
            <person name="Matsumura K."/>
            <person name="Nakajima Y."/>
            <person name="Mizuno T."/>
            <person name="Morinaga M."/>
            <person name="Sasaki M."/>
            <person name="Togashi T."/>
            <person name="Oyama M."/>
            <person name="Hata H."/>
            <person name="Watanabe M."/>
            <person name="Komatsu T."/>
            <person name="Mizushima-Sugano J."/>
            <person name="Satoh T."/>
            <person name="Shirai Y."/>
            <person name="Takahashi Y."/>
            <person name="Nakagawa K."/>
            <person name="Okumura K."/>
            <person name="Nagase T."/>
            <person name="Nomura N."/>
            <person name="Kikuchi H."/>
            <person name="Masuho Y."/>
            <person name="Yamashita R."/>
            <person name="Nakai K."/>
            <person name="Yada T."/>
            <person name="Nakamura Y."/>
            <person name="Ohara O."/>
            <person name="Isogai T."/>
            <person name="Sugano S."/>
        </authorList>
    </citation>
    <scope>NUCLEOTIDE SEQUENCE [LARGE SCALE MRNA] (ISOFORMS 12 AND 16)</scope>
    <source>
        <tissue>Adrenal gland</tissue>
        <tissue>Testis</tissue>
    </source>
</reference>
<reference key="4">
    <citation type="journal article" date="2004" name="Genome Res.">
        <title>The status, quality, and expansion of the NIH full-length cDNA project: the Mammalian Gene Collection (MGC).</title>
        <authorList>
            <consortium name="The MGC Project Team"/>
        </authorList>
    </citation>
    <scope>NUCLEOTIDE SEQUENCE [LARGE SCALE MRNA] (ISOFORM 1)</scope>
    <scope>NUCLEOTIDE SEQUENCE [LARGE SCALE MRNA] OF 61-902 (ISOFORMS 1/2/4/6)</scope>
    <scope>VARIANTS ALA-160 AND PRO-800</scope>
    <source>
        <tissue>Ovary</tissue>
        <tissue>Rhabdomyosarcoma</tissue>
    </source>
</reference>
<reference key="5">
    <citation type="journal article" date="1999" name="Cell">
        <title>Generic signals and specific outcomes: signaling through Ca2+, calcineurin, and NF-AT.</title>
        <authorList>
            <person name="Crabtree G.R."/>
        </authorList>
    </citation>
    <scope>REVIEW</scope>
</reference>
<reference key="6">
    <citation type="journal article" date="2001" name="J. Biol. Chem.">
        <title>Requirement of two NFATc4 transactivation domains for CBP potentiation.</title>
        <authorList>
            <person name="Yang T.T.C."/>
            <person name="Davis R.J."/>
            <person name="Chow C.-W."/>
        </authorList>
    </citation>
    <scope>FUNCTION</scope>
    <scope>INTERACTION WITH CREBBP</scope>
</reference>
<reference key="7">
    <citation type="journal article" date="2002" name="Mol. Cell. Biol.">
        <title>Phosphorylation of NFATc4 by p38 mitogen-activated protein kinases.</title>
        <authorList>
            <person name="Yang T.T.C."/>
            <person name="Xiong Q."/>
            <person name="Enslen H."/>
            <person name="Davis R.J."/>
            <person name="Chow C.-W."/>
        </authorList>
    </citation>
    <scope>FUNCTION</scope>
    <scope>SUBCELLULAR LOCATION</scope>
    <scope>PHOSPHORYLATION AT SER-168 AND SER-170</scope>
    <scope>MUTAGENESIS OF SER-168 AND SER-170</scope>
</reference>
<reference key="8">
    <citation type="journal article" date="2002" name="Mol. Cell. Biol.">
        <title>Targeted disruption of NFATc3, but not NFATc4, reveals an intrinsic defect in calcineurin-mediated cardiac hypertrophic growth.</title>
        <authorList>
            <person name="Wilkins B.J."/>
            <person name="De Windt L.J."/>
            <person name="Bueno O.F."/>
            <person name="Braz J.C."/>
            <person name="Glascock B.J."/>
            <person name="Kimball T.F."/>
            <person name="Molkentin J.D."/>
        </authorList>
    </citation>
    <scope>SUBCELLULAR LOCATION</scope>
    <scope>TISSUE SPECIFICITY</scope>
</reference>
<reference key="9">
    <citation type="journal article" date="2007" name="Cancer Res.">
        <title>Nuclear factor of activated T3 is a negative regulator of Ras-JNK1/2-AP-1 induced cell transformation.</title>
        <authorList>
            <person name="Yao K."/>
            <person name="Cho Y.-Y."/>
            <person name="Bergen H.R. III"/>
            <person name="Madden B.J."/>
            <person name="Choi B.Y."/>
            <person name="Ma W.-Y."/>
            <person name="Bode A.M."/>
            <person name="Dong Z."/>
        </authorList>
    </citation>
    <scope>FUNCTION</scope>
    <scope>INTERACTION WITH MAPK8 AND MAPK9</scope>
    <scope>PHOSPHORYLATION AT SER-213 AND SER-217</scope>
    <scope>MUTAGENESIS OF SER-213 AND SER-217</scope>
</reference>
<reference key="10">
    <citation type="journal article" date="2007" name="J. Biol. Chem.">
        <title>RSK2 mediates muscle cell differentiation through regulation of NFAT3.</title>
        <authorList>
            <person name="Cho Y.-Y."/>
            <person name="Yao K."/>
            <person name="Bode A.M."/>
            <person name="Bergen H.R. III"/>
            <person name="Madden B.J."/>
            <person name="Oh S.-M."/>
            <person name="Ermakova S."/>
            <person name="Kang B.S."/>
            <person name="Choi H.S."/>
            <person name="Shim J.-H."/>
            <person name="Dong Z."/>
        </authorList>
    </citation>
    <scope>FUNCTION</scope>
    <scope>INTERACTION WITH RPS6KA3</scope>
    <scope>PHOSPHORYLATION AT SER-289 AND SER-344</scope>
    <scope>SUBCELLULAR LOCATION</scope>
</reference>
<reference key="11">
    <citation type="journal article" date="2008" name="Cell. Mol. Life Sci.">
        <title>Repression of NFAT3 transcriptional activity by estrogen receptors.</title>
        <authorList>
            <person name="Qin X."/>
            <person name="Wang X.-H."/>
            <person name="Yang Z.-H."/>
            <person name="Ding L.-H."/>
            <person name="Xu X.-J."/>
            <person name="Cheng L."/>
            <person name="Niu C."/>
            <person name="Sun H.-W."/>
            <person name="Zhang H."/>
            <person name="Ye Q.-N."/>
        </authorList>
    </citation>
    <scope>FUNCTION</scope>
    <scope>INTERACTION WITH ESR1 AND ESR2</scope>
    <scope>SUBCELLULAR LOCATION</scope>
    <scope>ACTIVITY REGULATION</scope>
</reference>
<reference key="12">
    <citation type="journal article" date="2008" name="FEBS Lett.">
        <title>Regulation of the stability and transcriptional activity of NFATc4 by ubiquitination.</title>
        <authorList>
            <person name="Fan Y."/>
            <person name="Xie P."/>
            <person name="Zhang T."/>
            <person name="Zhang H."/>
            <person name="Gu D."/>
            <person name="She M."/>
            <person name="Li H."/>
        </authorList>
    </citation>
    <scope>UBIQUITINATION</scope>
</reference>
<reference key="13">
    <citation type="journal article" date="2008" name="J. Proteome Res.">
        <title>Combining protein-based IMAC, peptide-based IMAC, and MudPIT for efficient phosphoproteomic analysis.</title>
        <authorList>
            <person name="Cantin G.T."/>
            <person name="Yi W."/>
            <person name="Lu B."/>
            <person name="Park S.K."/>
            <person name="Xu T."/>
            <person name="Lee J.-D."/>
            <person name="Yates J.R. III"/>
        </authorList>
    </citation>
    <scope>IDENTIFICATION BY MASS SPECTROMETRY [LARGE SCALE ANALYSIS]</scope>
    <source>
        <tissue>Cervix carcinoma</tissue>
    </source>
</reference>
<reference key="14">
    <citation type="journal article" date="2008" name="Mol. Cell. Biol.">
        <title>Integration of protein kinases mTOR and extracellular signal-regulated kinase 5 in regulating nucleocytoplasmic localization of NFATc4.</title>
        <authorList>
            <person name="Yang T.T.C."/>
            <person name="Yu R.Y.L."/>
            <person name="Agadir A."/>
            <person name="Gao G.-J."/>
            <person name="Campos-Gonzalez R."/>
            <person name="Tournier C."/>
            <person name="Chow C.-W."/>
        </authorList>
    </citation>
    <scope>FUNCTION</scope>
    <scope>SUBCELLULAR LOCATION</scope>
    <scope>PHOSPHORYLATION AT SER-168 AND SER-170</scope>
    <scope>INTERACTION WITH MTOR AND MAPK7</scope>
</reference>
<reference key="15">
    <citation type="journal article" date="2008" name="Mol. Immunol.">
        <title>The interleukin-1 receptor associated kinase 1 contributes to the regulation of NFAT.</title>
        <authorList>
            <person name="Wang D."/>
            <person name="Fasciano S."/>
            <person name="Li L."/>
        </authorList>
    </citation>
    <scope>SUBCELLULAR LOCATION</scope>
    <scope>INTERACTION WITH IRAK1</scope>
    <scope>PHOSPHORYLATION AT SER-168 AND SER-170</scope>
</reference>
<reference key="16">
    <citation type="journal article" date="2008" name="Science">
        <title>NFAT binding and regulation of T cell activation by the cytoplasmic scaffolding Homer proteins.</title>
        <authorList>
            <person name="Huang G.N."/>
            <person name="Huso D.L."/>
            <person name="Bouyain S."/>
            <person name="Tu J."/>
            <person name="McCorkell K.A."/>
            <person name="May M.J."/>
            <person name="Zhu Y."/>
            <person name="Lutz M."/>
            <person name="Collins S."/>
            <person name="Dehoff M."/>
            <person name="Kang S."/>
            <person name="Whartenby K."/>
            <person name="Powell J."/>
            <person name="Leahy D."/>
            <person name="Worley P.F."/>
        </authorList>
    </citation>
    <scope>INTERACTION WITH HOMER1; HOMER2 AND HOMER3</scope>
</reference>
<reference key="17">
    <citation type="journal article" date="2009" name="Sci. Signal.">
        <title>Quantitative phosphoproteomic analysis of T cell receptor signaling reveals system-wide modulation of protein-protein interactions.</title>
        <authorList>
            <person name="Mayya V."/>
            <person name="Lundgren D.H."/>
            <person name="Hwang S.-I."/>
            <person name="Rezaul K."/>
            <person name="Wu L."/>
            <person name="Eng J.K."/>
            <person name="Rodionov V."/>
            <person name="Han D.K."/>
        </authorList>
    </citation>
    <scope>IDENTIFICATION BY MASS SPECTROMETRY [LARGE SCALE ANALYSIS]</scope>
    <source>
        <tissue>Leukemic T-cell</tissue>
    </source>
</reference>
<reference key="18">
    <citation type="journal article" date="2017" name="Nat. Struct. Mol. Biol.">
        <title>Site-specific mapping of the human SUMO proteome reveals co-modification with phosphorylation.</title>
        <authorList>
            <person name="Hendriks I.A."/>
            <person name="Lyon D."/>
            <person name="Young C."/>
            <person name="Jensen L.J."/>
            <person name="Vertegaal A.C."/>
            <person name="Nielsen M.L."/>
        </authorList>
    </citation>
    <scope>SUMOYLATION [LARGE SCALE ANALYSIS] AT LYS-689</scope>
    <scope>IDENTIFICATION BY MASS SPECTROMETRY [LARGE SCALE ANALYSIS]</scope>
</reference>
<reference key="19">
    <citation type="journal article" date="2015" name="Neurochem. Res.">
        <title>Transcriptional regulation of BACE1 by NFAT3 leads to enhanced amyloidogenic processing.</title>
        <authorList>
            <person name="Mei Z."/>
            <person name="Yan P."/>
            <person name="Tan X."/>
            <person name="Zheng S."/>
            <person name="Situ B."/>
        </authorList>
    </citation>
    <scope>FUNCTION</scope>
</reference>
<reference key="20">
    <citation type="submission" date="2008-02" db="PDB data bank">
        <title>Solution structure of the TIG domain from human nuclear factor of activated T-cells, cytoplasmic 4.</title>
        <authorList>
            <consortium name="RIKEN structural genomics initiative (RSGI)"/>
        </authorList>
    </citation>
    <scope>STRUCTURE BY NMR OF 585-691</scope>
</reference>
<sequence>MGAASCEDEELEFKLVFGEEKEAPPLGAGGLGEELDSEDAPPCCRLALGEPPPYGAAPIGIPRPPPPRPGMHSPPPRPAPSPGTWESQPARSVRLGGPGGGAGGAGGGRVLECPSIRITSISPTPEPPAALEDNPDAWGDGSPRDYPPPEGFGGYREAGGQGGGAFFSPSPGSSSLSSWSFFSDASDEAALYAACDEVESELNEAASRFGLGSPLPSPRASPRPWTPEDPWSLYGPSPGGRGPEDSWLLLSAPGPTPASPRPASPCGKRRYSSSGTPSSASPALSRRGSLGEEGSEPPPPPPLPLARDPGSPGPFDYVGAPPAESIPQKTRRTSSEQAVALPRSEEPASCNGKLPLGAEESVAPPGGSRKEVAGMDYLAVPSPLAWSKARIGGHSPIFRTSALPPLDWPLPSQYEQLELRIEVQPRAHHRAHYETEGSRGAVKAAPGGHPVVKLLGYSEKPLTLQMFIGTADERNLRPHAFYQVHRITGKMVATASYEAVVSGTKVLEMTLLPENNMAANIDCAGILKLRNSDIELRKGETDIGRKNTRVRLVFRVHVPQGGGKVVSVQAASVPIECSQRSAQELPQVEAYSPSACSVRGGEELVLTGSNFLPDSKVVFIERGPDGKLQWEEEATVNRLQSNEVTLTLTVPEYSNKRVSRPVQVYFYVSNGRRKRSPTQSFRFLPVICKEEPLPDSSLRGFPSASATPFGTDMDFSPPRPPYPSYPHEDPACETPYLSEGFGYGMPPLYPQTGPPPSYRPGLRMFPETRGTTGCAQPPAVSFLPRPFPSDPYGGRGSSFSLGLPFSPPAPFRPPPLPASPPLEGPFPSQSDVHPLPAEGYNKVGPGYGPGEGAPEQEKSRGGYSSGFRDSVPIQGITLEEVSEIIGRDLSGFPAPPGEEPPA</sequence>
<name>NFAC4_HUMAN</name>
<protein>
    <recommendedName>
        <fullName>Nuclear factor of activated T-cells, cytoplasmic 4</fullName>
        <shortName>NF-ATc4</shortName>
        <shortName>NFATc4</shortName>
    </recommendedName>
    <alternativeName>
        <fullName evidence="22 25">T-cell transcription factor NFAT3</fullName>
        <shortName evidence="25">NF-AT3</shortName>
    </alternativeName>
</protein>
<proteinExistence type="evidence at protein level"/>